<reference key="1">
    <citation type="journal article" date="2006" name="J. Bacteriol.">
        <title>Complete genome sequence of Yersinia pestis strains Antiqua and Nepal516: evidence of gene reduction in an emerging pathogen.</title>
        <authorList>
            <person name="Chain P.S.G."/>
            <person name="Hu P."/>
            <person name="Malfatti S.A."/>
            <person name="Radnedge L."/>
            <person name="Larimer F."/>
            <person name="Vergez L.M."/>
            <person name="Worsham P."/>
            <person name="Chu M.C."/>
            <person name="Andersen G.L."/>
        </authorList>
    </citation>
    <scope>NUCLEOTIDE SEQUENCE [LARGE SCALE GENOMIC DNA]</scope>
    <source>
        <strain>Antiqua</strain>
    </source>
</reference>
<organism>
    <name type="scientific">Yersinia pestis bv. Antiqua (strain Antiqua)</name>
    <dbReference type="NCBI Taxonomy" id="360102"/>
    <lineage>
        <taxon>Bacteria</taxon>
        <taxon>Pseudomonadati</taxon>
        <taxon>Pseudomonadota</taxon>
        <taxon>Gammaproteobacteria</taxon>
        <taxon>Enterobacterales</taxon>
        <taxon>Yersiniaceae</taxon>
        <taxon>Yersinia</taxon>
    </lineage>
</organism>
<keyword id="KW-0963">Cytoplasm</keyword>
<keyword id="KW-0819">tRNA processing</keyword>
<accession>Q1C2T7</accession>
<proteinExistence type="inferred from homology"/>
<dbReference type="EMBL" id="CP000308">
    <property type="protein sequence ID" value="ABG15235.1"/>
    <property type="molecule type" value="Genomic_DNA"/>
</dbReference>
<dbReference type="RefSeq" id="WP_002212322.1">
    <property type="nucleotide sequence ID" value="NZ_CP009906.1"/>
</dbReference>
<dbReference type="SMR" id="Q1C2T7"/>
<dbReference type="GeneID" id="57974404"/>
<dbReference type="KEGG" id="ypa:YPA_3273"/>
<dbReference type="Proteomes" id="UP000001971">
    <property type="component" value="Chromosome"/>
</dbReference>
<dbReference type="GO" id="GO:1990228">
    <property type="term" value="C:sulfurtransferase complex"/>
    <property type="evidence" value="ECO:0007669"/>
    <property type="project" value="TreeGrafter"/>
</dbReference>
<dbReference type="GO" id="GO:0002143">
    <property type="term" value="P:tRNA wobble position uridine thiolation"/>
    <property type="evidence" value="ECO:0007669"/>
    <property type="project" value="InterPro"/>
</dbReference>
<dbReference type="FunFam" id="3.40.1260.10:FF:000002">
    <property type="entry name" value="Sulfurtransferase TusB"/>
    <property type="match status" value="1"/>
</dbReference>
<dbReference type="Gene3D" id="3.40.1260.10">
    <property type="entry name" value="DsrEFH-like"/>
    <property type="match status" value="1"/>
</dbReference>
<dbReference type="HAMAP" id="MF_01564">
    <property type="entry name" value="Thiourid_synth_B"/>
    <property type="match status" value="1"/>
</dbReference>
<dbReference type="InterPro" id="IPR027396">
    <property type="entry name" value="DsrEFH-like"/>
</dbReference>
<dbReference type="InterPro" id="IPR023526">
    <property type="entry name" value="Sulphur_relay_TusB"/>
</dbReference>
<dbReference type="InterPro" id="IPR007215">
    <property type="entry name" value="Sulphur_relay_TusB/DsrH"/>
</dbReference>
<dbReference type="NCBIfam" id="NF010035">
    <property type="entry name" value="PRK13510.1"/>
    <property type="match status" value="1"/>
</dbReference>
<dbReference type="NCBIfam" id="TIGR03011">
    <property type="entry name" value="sulf_tusB_dsrH"/>
    <property type="match status" value="1"/>
</dbReference>
<dbReference type="PANTHER" id="PTHR37526">
    <property type="entry name" value="PROTEIN TUSB"/>
    <property type="match status" value="1"/>
</dbReference>
<dbReference type="PANTHER" id="PTHR37526:SF1">
    <property type="entry name" value="PROTEIN TUSB"/>
    <property type="match status" value="1"/>
</dbReference>
<dbReference type="Pfam" id="PF04077">
    <property type="entry name" value="DsrH"/>
    <property type="match status" value="1"/>
</dbReference>
<dbReference type="SUPFAM" id="SSF75169">
    <property type="entry name" value="DsrEFH-like"/>
    <property type="match status" value="1"/>
</dbReference>
<protein>
    <recommendedName>
        <fullName evidence="1">Protein TusB</fullName>
    </recommendedName>
    <alternativeName>
        <fullName evidence="1">tRNA 2-thiouridine synthesizing protein B</fullName>
    </alternativeName>
</protein>
<sequence>MLYTVSHSPYHCDLSALLRLATSEDDILLLQDGVIAALKESETLKLLLNNPASLFVLEDDVIARGLVGQISDNATLISYTHFVDLTLRHQQQLAW</sequence>
<gene>
    <name evidence="1" type="primary">tusB</name>
    <name type="ordered locus">YPA_3273</name>
</gene>
<comment type="function">
    <text evidence="1">Part of a sulfur-relay system required for 2-thiolation of 5-methylaminomethyl-2-thiouridine (mnm(5)s(2)U) at tRNA wobble positions.</text>
</comment>
<comment type="subunit">
    <text evidence="1">Heterohexamer, formed by a dimer of trimers. The hexameric TusBCD complex contains 2 copies each of TusB, TusC and TusD. The TusBCD complex interacts with TusE.</text>
</comment>
<comment type="subcellular location">
    <subcellularLocation>
        <location evidence="1">Cytoplasm</location>
    </subcellularLocation>
</comment>
<comment type="similarity">
    <text evidence="1">Belongs to the DsrH/TusB family.</text>
</comment>
<name>TUSB_YERPA</name>
<evidence type="ECO:0000255" key="1">
    <source>
        <dbReference type="HAMAP-Rule" id="MF_01564"/>
    </source>
</evidence>
<feature type="chain" id="PRO_1000069064" description="Protein TusB">
    <location>
        <begin position="1"/>
        <end position="95"/>
    </location>
</feature>